<evidence type="ECO:0000255" key="1">
    <source>
        <dbReference type="HAMAP-Rule" id="MF_00332"/>
    </source>
</evidence>
<evidence type="ECO:0000256" key="2">
    <source>
        <dbReference type="SAM" id="MobiDB-lite"/>
    </source>
</evidence>
<keyword id="KW-0067">ATP-binding</keyword>
<keyword id="KW-0143">Chaperone</keyword>
<keyword id="KW-0547">Nucleotide-binding</keyword>
<keyword id="KW-0597">Phosphoprotein</keyword>
<keyword id="KW-1185">Reference proteome</keyword>
<keyword id="KW-0346">Stress response</keyword>
<gene>
    <name evidence="1" type="primary">dnaK</name>
    <name type="ordered locus">Lxx23780</name>
</gene>
<comment type="function">
    <text evidence="1">Acts as a chaperone.</text>
</comment>
<comment type="induction">
    <text evidence="1">By stress conditions e.g. heat shock.</text>
</comment>
<comment type="similarity">
    <text evidence="1">Belongs to the heat shock protein 70 family.</text>
</comment>
<dbReference type="EMBL" id="AE016822">
    <property type="protein sequence ID" value="AAT90016.1"/>
    <property type="molecule type" value="Genomic_DNA"/>
</dbReference>
<dbReference type="RefSeq" id="WP_011186995.1">
    <property type="nucleotide sequence ID" value="NC_006087.1"/>
</dbReference>
<dbReference type="SMR" id="Q6AC76"/>
<dbReference type="STRING" id="281090.Lxx23780"/>
<dbReference type="KEGG" id="lxx:Lxx23780"/>
<dbReference type="eggNOG" id="COG0443">
    <property type="taxonomic scope" value="Bacteria"/>
</dbReference>
<dbReference type="HOGENOM" id="CLU_005965_2_4_11"/>
<dbReference type="Proteomes" id="UP000001306">
    <property type="component" value="Chromosome"/>
</dbReference>
<dbReference type="GO" id="GO:0005524">
    <property type="term" value="F:ATP binding"/>
    <property type="evidence" value="ECO:0007669"/>
    <property type="project" value="UniProtKB-UniRule"/>
</dbReference>
<dbReference type="GO" id="GO:0140662">
    <property type="term" value="F:ATP-dependent protein folding chaperone"/>
    <property type="evidence" value="ECO:0007669"/>
    <property type="project" value="InterPro"/>
</dbReference>
<dbReference type="GO" id="GO:0051082">
    <property type="term" value="F:unfolded protein binding"/>
    <property type="evidence" value="ECO:0007669"/>
    <property type="project" value="InterPro"/>
</dbReference>
<dbReference type="CDD" id="cd10234">
    <property type="entry name" value="ASKHA_NBD_HSP70_DnaK-like"/>
    <property type="match status" value="1"/>
</dbReference>
<dbReference type="FunFam" id="2.60.34.10:FF:000014">
    <property type="entry name" value="Chaperone protein DnaK HSP70"/>
    <property type="match status" value="1"/>
</dbReference>
<dbReference type="FunFam" id="1.20.1270.10:FF:000001">
    <property type="entry name" value="Molecular chaperone DnaK"/>
    <property type="match status" value="1"/>
</dbReference>
<dbReference type="FunFam" id="3.30.420.40:FF:000071">
    <property type="entry name" value="Molecular chaperone DnaK"/>
    <property type="match status" value="1"/>
</dbReference>
<dbReference type="FunFam" id="3.90.640.10:FF:000003">
    <property type="entry name" value="Molecular chaperone DnaK"/>
    <property type="match status" value="1"/>
</dbReference>
<dbReference type="Gene3D" id="1.20.1270.10">
    <property type="match status" value="1"/>
</dbReference>
<dbReference type="Gene3D" id="3.30.420.40">
    <property type="match status" value="2"/>
</dbReference>
<dbReference type="Gene3D" id="3.90.640.10">
    <property type="entry name" value="Actin, Chain A, domain 4"/>
    <property type="match status" value="1"/>
</dbReference>
<dbReference type="Gene3D" id="2.60.34.10">
    <property type="entry name" value="Substrate Binding Domain Of DNAk, Chain A, domain 1"/>
    <property type="match status" value="1"/>
</dbReference>
<dbReference type="HAMAP" id="MF_00332">
    <property type="entry name" value="DnaK"/>
    <property type="match status" value="1"/>
</dbReference>
<dbReference type="InterPro" id="IPR043129">
    <property type="entry name" value="ATPase_NBD"/>
</dbReference>
<dbReference type="InterPro" id="IPR012725">
    <property type="entry name" value="Chaperone_DnaK"/>
</dbReference>
<dbReference type="InterPro" id="IPR018181">
    <property type="entry name" value="Heat_shock_70_CS"/>
</dbReference>
<dbReference type="InterPro" id="IPR029048">
    <property type="entry name" value="HSP70_C_sf"/>
</dbReference>
<dbReference type="InterPro" id="IPR029047">
    <property type="entry name" value="HSP70_peptide-bd_sf"/>
</dbReference>
<dbReference type="InterPro" id="IPR013126">
    <property type="entry name" value="Hsp_70_fam"/>
</dbReference>
<dbReference type="NCBIfam" id="NF001413">
    <property type="entry name" value="PRK00290.1"/>
    <property type="match status" value="1"/>
</dbReference>
<dbReference type="NCBIfam" id="TIGR02350">
    <property type="entry name" value="prok_dnaK"/>
    <property type="match status" value="1"/>
</dbReference>
<dbReference type="PANTHER" id="PTHR19375">
    <property type="entry name" value="HEAT SHOCK PROTEIN 70KDA"/>
    <property type="match status" value="1"/>
</dbReference>
<dbReference type="Pfam" id="PF00012">
    <property type="entry name" value="HSP70"/>
    <property type="match status" value="1"/>
</dbReference>
<dbReference type="PRINTS" id="PR00301">
    <property type="entry name" value="HEATSHOCK70"/>
</dbReference>
<dbReference type="SUPFAM" id="SSF53067">
    <property type="entry name" value="Actin-like ATPase domain"/>
    <property type="match status" value="2"/>
</dbReference>
<dbReference type="SUPFAM" id="SSF100920">
    <property type="entry name" value="Heat shock protein 70kD (HSP70), peptide-binding domain"/>
    <property type="match status" value="1"/>
</dbReference>
<dbReference type="PROSITE" id="PS00297">
    <property type="entry name" value="HSP70_1"/>
    <property type="match status" value="1"/>
</dbReference>
<dbReference type="PROSITE" id="PS00329">
    <property type="entry name" value="HSP70_2"/>
    <property type="match status" value="1"/>
</dbReference>
<dbReference type="PROSITE" id="PS01036">
    <property type="entry name" value="HSP70_3"/>
    <property type="match status" value="1"/>
</dbReference>
<reference key="1">
    <citation type="journal article" date="2004" name="Mol. Plant Microbe Interact.">
        <title>The genome sequence of the Gram-positive sugarcane pathogen Leifsonia xyli subsp. xyli.</title>
        <authorList>
            <person name="Monteiro-Vitorello C.B."/>
            <person name="Camargo L.E.A."/>
            <person name="Van Sluys M.A."/>
            <person name="Kitajima J.P."/>
            <person name="Truffi D."/>
            <person name="do Amaral A.M."/>
            <person name="Harakava R."/>
            <person name="de Oliveira J.C.F."/>
            <person name="Wood D."/>
            <person name="de Oliveira M.C."/>
            <person name="Miyaki C.Y."/>
            <person name="Takita M.A."/>
            <person name="da Silva A.C.R."/>
            <person name="Furlan L.R."/>
            <person name="Carraro D.M."/>
            <person name="Camarotte G."/>
            <person name="Almeida N.F. Jr."/>
            <person name="Carrer H."/>
            <person name="Coutinho L.L."/>
            <person name="El-Dorry H.A."/>
            <person name="Ferro M.I.T."/>
            <person name="Gagliardi P.R."/>
            <person name="Giglioti E."/>
            <person name="Goldman M.H.S."/>
            <person name="Goldman G.H."/>
            <person name="Kimura E.T."/>
            <person name="Ferro E.S."/>
            <person name="Kuramae E.E."/>
            <person name="Lemos E.G.M."/>
            <person name="Lemos M.V.F."/>
            <person name="Mauro S.M.Z."/>
            <person name="Machado M.A."/>
            <person name="Marino C.L."/>
            <person name="Menck C.F."/>
            <person name="Nunes L.R."/>
            <person name="Oliveira R.C."/>
            <person name="Pereira G.G."/>
            <person name="Siqueira W."/>
            <person name="de Souza A.A."/>
            <person name="Tsai S.M."/>
            <person name="Zanca A.S."/>
            <person name="Simpson A.J.G."/>
            <person name="Brumbley S.M."/>
            <person name="Setubal J.C."/>
        </authorList>
    </citation>
    <scope>NUCLEOTIDE SEQUENCE [LARGE SCALE GENOMIC DNA]</scope>
    <source>
        <strain>CTCB07</strain>
    </source>
</reference>
<sequence>MSRAVGIDLGTTNSVVSVLEGGEPTVIANAEGFRTTPSVVAFTKDGEVLVGETAKRQAVTNVDRTLSSVKRHMGTDWKTQEIDGKKYTAQEISARILQKLKRDAEQYLGDTVTDAVITVPAYFNDAERQATKEAGEIAGLNVLRIINEPTAAALAYGLDKGKEDELILVFDLGGGTFDVSLLEVGKDDDFSTIQVRATAGDNRLGGDDWDQRIVEWLIKRFKESTGVDASTDKIAKQRLKEAAEQAKKELSSSMSTSIQLPYLSLTENGPANLDETLTRAQFEQMTSDLLDRTKKPFKDVIKEAGIEVSDIAHVVLVGGSTRMPAVSELVKQETGGQEPNKGVNPDEVVAVGAALQAGVLKGERKDVLLIDVTPLSLGIETKGGIMTKLIERNTAIPTKRSETFTTADDNQPSVAIQVFQGEREFTRDNKPLGTFELTGIAPAPRGIPQVEVTFDIDANGIVHVSAKDKGTGKEQSMTITGGSSLPKDDIERMVREAEEHAAEDKKRRESAETRNQAEQLVYSIEKLIKDNEEKLPEDIKNEVQGDVDALKAALAGEDDEAVKTAYDKLNESQQKLGQAIYSAAQAAEAPAAAAGEEASAPSSSTGEEDVIDAEVVEDEEKKQQ</sequence>
<protein>
    <recommendedName>
        <fullName evidence="1">Chaperone protein DnaK</fullName>
    </recommendedName>
    <alternativeName>
        <fullName evidence="1">HSP70</fullName>
    </alternativeName>
    <alternativeName>
        <fullName evidence="1">Heat shock 70 kDa protein</fullName>
    </alternativeName>
    <alternativeName>
        <fullName evidence="1">Heat shock protein 70</fullName>
    </alternativeName>
</protein>
<feature type="chain" id="PRO_0000078479" description="Chaperone protein DnaK">
    <location>
        <begin position="1"/>
        <end position="624"/>
    </location>
</feature>
<feature type="region of interest" description="Disordered" evidence="2">
    <location>
        <begin position="496"/>
        <end position="515"/>
    </location>
</feature>
<feature type="region of interest" description="Disordered" evidence="2">
    <location>
        <begin position="583"/>
        <end position="624"/>
    </location>
</feature>
<feature type="compositionally biased region" description="Basic and acidic residues" evidence="2">
    <location>
        <begin position="496"/>
        <end position="512"/>
    </location>
</feature>
<feature type="compositionally biased region" description="Low complexity" evidence="2">
    <location>
        <begin position="583"/>
        <end position="605"/>
    </location>
</feature>
<feature type="compositionally biased region" description="Acidic residues" evidence="2">
    <location>
        <begin position="606"/>
        <end position="618"/>
    </location>
</feature>
<feature type="modified residue" description="Phosphothreonine; by autocatalysis" evidence="1">
    <location>
        <position position="176"/>
    </location>
</feature>
<accession>Q6AC76</accession>
<name>DNAK_LEIXX</name>
<proteinExistence type="inferred from homology"/>
<organism>
    <name type="scientific">Leifsonia xyli subsp. xyli (strain CTCB07)</name>
    <dbReference type="NCBI Taxonomy" id="281090"/>
    <lineage>
        <taxon>Bacteria</taxon>
        <taxon>Bacillati</taxon>
        <taxon>Actinomycetota</taxon>
        <taxon>Actinomycetes</taxon>
        <taxon>Micrococcales</taxon>
        <taxon>Microbacteriaceae</taxon>
        <taxon>Leifsonia</taxon>
    </lineage>
</organism>